<evidence type="ECO:0000255" key="1">
    <source>
        <dbReference type="HAMAP-Rule" id="MF_00634"/>
    </source>
</evidence>
<evidence type="ECO:0000305" key="2"/>
<organism>
    <name type="scientific">Escherichia coli (strain K12)</name>
    <dbReference type="NCBI Taxonomy" id="83333"/>
    <lineage>
        <taxon>Bacteria</taxon>
        <taxon>Pseudomonadati</taxon>
        <taxon>Pseudomonadota</taxon>
        <taxon>Gammaproteobacteria</taxon>
        <taxon>Enterobacterales</taxon>
        <taxon>Enterobacteriaceae</taxon>
        <taxon>Escherichia</taxon>
    </lineage>
</organism>
<dbReference type="EMBL" id="U28377">
    <property type="protein sequence ID" value="AAA69120.1"/>
    <property type="status" value="ALT_INIT"/>
    <property type="molecule type" value="Genomic_DNA"/>
</dbReference>
<dbReference type="EMBL" id="U00096">
    <property type="protein sequence ID" value="AAC75990.2"/>
    <property type="molecule type" value="Genomic_DNA"/>
</dbReference>
<dbReference type="EMBL" id="AP009048">
    <property type="protein sequence ID" value="BAE77016.1"/>
    <property type="molecule type" value="Genomic_DNA"/>
</dbReference>
<dbReference type="PIR" id="H65080">
    <property type="entry name" value="H65080"/>
</dbReference>
<dbReference type="RefSeq" id="NP_417428.2">
    <property type="nucleotide sequence ID" value="NC_000913.3"/>
</dbReference>
<dbReference type="RefSeq" id="WP_000994920.1">
    <property type="nucleotide sequence ID" value="NZ_SSUV01000019.1"/>
</dbReference>
<dbReference type="SMR" id="P52060"/>
<dbReference type="BioGRID" id="4259417">
    <property type="interactions" value="180"/>
</dbReference>
<dbReference type="BioGRID" id="851745">
    <property type="interactions" value="3"/>
</dbReference>
<dbReference type="FunCoup" id="P52060">
    <property type="interactions" value="372"/>
</dbReference>
<dbReference type="IntAct" id="P52060">
    <property type="interactions" value="3"/>
</dbReference>
<dbReference type="STRING" id="511145.b2953"/>
<dbReference type="jPOST" id="P52060"/>
<dbReference type="PaxDb" id="511145-b2953"/>
<dbReference type="EnsemblBacteria" id="AAC75990">
    <property type="protein sequence ID" value="AAC75990"/>
    <property type="gene ID" value="b2953"/>
</dbReference>
<dbReference type="GeneID" id="947424"/>
<dbReference type="KEGG" id="ecj:JW5479"/>
<dbReference type="KEGG" id="eco:b2953"/>
<dbReference type="KEGG" id="ecoc:C3026_16160"/>
<dbReference type="PATRIC" id="fig|511145.12.peg.3047"/>
<dbReference type="EchoBASE" id="EB2806"/>
<dbReference type="eggNOG" id="COG1872">
    <property type="taxonomic scope" value="Bacteria"/>
</dbReference>
<dbReference type="HOGENOM" id="CLU_130694_5_0_6"/>
<dbReference type="InParanoid" id="P52060"/>
<dbReference type="OMA" id="AANKQCV"/>
<dbReference type="OrthoDB" id="9800587at2"/>
<dbReference type="PhylomeDB" id="P52060"/>
<dbReference type="BioCyc" id="EcoCyc:G7529-MONOMER"/>
<dbReference type="PRO" id="PR:P52060"/>
<dbReference type="Proteomes" id="UP000000625">
    <property type="component" value="Chromosome"/>
</dbReference>
<dbReference type="GO" id="GO:0005737">
    <property type="term" value="C:cytoplasm"/>
    <property type="evidence" value="ECO:0000318"/>
    <property type="project" value="GO_Central"/>
</dbReference>
<dbReference type="Gene3D" id="3.30.1200.10">
    <property type="entry name" value="YggU-like"/>
    <property type="match status" value="1"/>
</dbReference>
<dbReference type="HAMAP" id="MF_00634">
    <property type="entry name" value="UPF0235"/>
    <property type="match status" value="1"/>
</dbReference>
<dbReference type="InterPro" id="IPR003746">
    <property type="entry name" value="DUF167"/>
</dbReference>
<dbReference type="InterPro" id="IPR036591">
    <property type="entry name" value="YggU-like_sf"/>
</dbReference>
<dbReference type="NCBIfam" id="TIGR00251">
    <property type="entry name" value="DUF167 family protein"/>
    <property type="match status" value="1"/>
</dbReference>
<dbReference type="NCBIfam" id="NF003466">
    <property type="entry name" value="PRK05090.1"/>
    <property type="match status" value="1"/>
</dbReference>
<dbReference type="PANTHER" id="PTHR13420">
    <property type="entry name" value="UPF0235 PROTEIN C15ORF40"/>
    <property type="match status" value="1"/>
</dbReference>
<dbReference type="PANTHER" id="PTHR13420:SF7">
    <property type="entry name" value="UPF0235 PROTEIN C15ORF40"/>
    <property type="match status" value="1"/>
</dbReference>
<dbReference type="Pfam" id="PF02594">
    <property type="entry name" value="DUF167"/>
    <property type="match status" value="1"/>
</dbReference>
<dbReference type="SMART" id="SM01152">
    <property type="entry name" value="DUF167"/>
    <property type="match status" value="1"/>
</dbReference>
<dbReference type="SUPFAM" id="SSF69786">
    <property type="entry name" value="YggU-like"/>
    <property type="match status" value="1"/>
</dbReference>
<sequence>MNAVTVNDDGLVLRLYIQPKASRDSIVGLHGDEVKVAITAPPVDGQANSHLVKFLGKQFRVAKSQVVIEKGELGRHKQIKIINPQQIPPEIAALIN</sequence>
<feature type="chain" id="PRO_0000139441" description="UPF0235 protein YggU">
    <location>
        <begin position="1"/>
        <end position="96"/>
    </location>
</feature>
<name>YGGU_ECOLI</name>
<comment type="similarity">
    <text evidence="1">Belongs to the UPF0235 family.</text>
</comment>
<comment type="sequence caution" evidence="2">
    <conflict type="erroneous initiation">
        <sequence resource="EMBL-CDS" id="AAA69120"/>
    </conflict>
    <text>Extended N-terminus.</text>
</comment>
<keyword id="KW-1185">Reference proteome</keyword>
<reference key="1">
    <citation type="journal article" date="1997" name="Science">
        <title>The complete genome sequence of Escherichia coli K-12.</title>
        <authorList>
            <person name="Blattner F.R."/>
            <person name="Plunkett G. III"/>
            <person name="Bloch C.A."/>
            <person name="Perna N.T."/>
            <person name="Burland V."/>
            <person name="Riley M."/>
            <person name="Collado-Vides J."/>
            <person name="Glasner J.D."/>
            <person name="Rode C.K."/>
            <person name="Mayhew G.F."/>
            <person name="Gregor J."/>
            <person name="Davis N.W."/>
            <person name="Kirkpatrick H.A."/>
            <person name="Goeden M.A."/>
            <person name="Rose D.J."/>
            <person name="Mau B."/>
            <person name="Shao Y."/>
        </authorList>
    </citation>
    <scope>NUCLEOTIDE SEQUENCE [LARGE SCALE GENOMIC DNA]</scope>
    <source>
        <strain>K12 / MG1655 / ATCC 47076</strain>
    </source>
</reference>
<reference key="2">
    <citation type="journal article" date="2006" name="Mol. Syst. Biol.">
        <title>Highly accurate genome sequences of Escherichia coli K-12 strains MG1655 and W3110.</title>
        <authorList>
            <person name="Hayashi K."/>
            <person name="Morooka N."/>
            <person name="Yamamoto Y."/>
            <person name="Fujita K."/>
            <person name="Isono K."/>
            <person name="Choi S."/>
            <person name="Ohtsubo E."/>
            <person name="Baba T."/>
            <person name="Wanner B.L."/>
            <person name="Mori H."/>
            <person name="Horiuchi T."/>
        </authorList>
    </citation>
    <scope>NUCLEOTIDE SEQUENCE [LARGE SCALE GENOMIC DNA]</scope>
    <source>
        <strain>K12 / W3110 / ATCC 27325 / DSM 5911</strain>
    </source>
</reference>
<accession>P52060</accession>
<accession>Q2M9P0</accession>
<proteinExistence type="inferred from homology"/>
<protein>
    <recommendedName>
        <fullName evidence="1">UPF0235 protein YggU</fullName>
    </recommendedName>
</protein>
<gene>
    <name evidence="1" type="primary">yggU</name>
    <name type="ordered locus">b2953</name>
    <name type="ordered locus">JW5479</name>
</gene>